<evidence type="ECO:0000250" key="1"/>
<evidence type="ECO:0000255" key="2"/>
<evidence type="ECO:0000256" key="3">
    <source>
        <dbReference type="SAM" id="MobiDB-lite"/>
    </source>
</evidence>
<evidence type="ECO:0000305" key="4"/>
<name>SECG_ECO57</name>
<accession>P0AGA1</accession>
<accession>P33582</accession>
<sequence length="110" mass="11365">MYEALLVVFLIVAIGLVGLIMLQQGKGADMGASFGAGASATLFGSSGSGNFMTRMTALLATLFFIISLVLGNINSNKTNKGSEWENLSAPAKTEQTQPAAPAKPTSDIPN</sequence>
<organism>
    <name type="scientific">Escherichia coli O157:H7</name>
    <dbReference type="NCBI Taxonomy" id="83334"/>
    <lineage>
        <taxon>Bacteria</taxon>
        <taxon>Pseudomonadati</taxon>
        <taxon>Pseudomonadota</taxon>
        <taxon>Gammaproteobacteria</taxon>
        <taxon>Enterobacterales</taxon>
        <taxon>Enterobacteriaceae</taxon>
        <taxon>Escherichia</taxon>
    </lineage>
</organism>
<gene>
    <name type="primary">secG</name>
    <name type="ordered locus">Z4537</name>
    <name type="ordered locus">ECs4054</name>
</gene>
<feature type="chain" id="PRO_0000157226" description="Protein-export membrane protein SecG">
    <location>
        <begin position="1"/>
        <end position="110"/>
    </location>
</feature>
<feature type="topological domain" description="Periplasmic" evidence="2">
    <location>
        <begin position="1"/>
        <end position="3"/>
    </location>
</feature>
<feature type="transmembrane region" description="Helical" evidence="2">
    <location>
        <begin position="4"/>
        <end position="22"/>
    </location>
</feature>
<feature type="topological domain" description="Cytoplasmic" evidence="2">
    <location>
        <begin position="23"/>
        <end position="54"/>
    </location>
</feature>
<feature type="transmembrane region" description="Helical" evidence="2">
    <location>
        <begin position="55"/>
        <end position="72"/>
    </location>
</feature>
<feature type="topological domain" description="Periplasmic" evidence="2">
    <location>
        <begin position="73"/>
        <end position="110"/>
    </location>
</feature>
<feature type="region of interest" description="Disordered" evidence="3">
    <location>
        <begin position="81"/>
        <end position="110"/>
    </location>
</feature>
<reference key="1">
    <citation type="journal article" date="2001" name="Nature">
        <title>Genome sequence of enterohaemorrhagic Escherichia coli O157:H7.</title>
        <authorList>
            <person name="Perna N.T."/>
            <person name="Plunkett G. III"/>
            <person name="Burland V."/>
            <person name="Mau B."/>
            <person name="Glasner J.D."/>
            <person name="Rose D.J."/>
            <person name="Mayhew G.F."/>
            <person name="Evans P.S."/>
            <person name="Gregor J."/>
            <person name="Kirkpatrick H.A."/>
            <person name="Posfai G."/>
            <person name="Hackett J."/>
            <person name="Klink S."/>
            <person name="Boutin A."/>
            <person name="Shao Y."/>
            <person name="Miller L."/>
            <person name="Grotbeck E.J."/>
            <person name="Davis N.W."/>
            <person name="Lim A."/>
            <person name="Dimalanta E.T."/>
            <person name="Potamousis K."/>
            <person name="Apodaca J."/>
            <person name="Anantharaman T.S."/>
            <person name="Lin J."/>
            <person name="Yen G."/>
            <person name="Schwartz D.C."/>
            <person name="Welch R.A."/>
            <person name="Blattner F.R."/>
        </authorList>
    </citation>
    <scope>NUCLEOTIDE SEQUENCE [LARGE SCALE GENOMIC DNA]</scope>
    <source>
        <strain>O157:H7 / EDL933 / ATCC 700927 / EHEC</strain>
    </source>
</reference>
<reference key="2">
    <citation type="journal article" date="2001" name="DNA Res.">
        <title>Complete genome sequence of enterohemorrhagic Escherichia coli O157:H7 and genomic comparison with a laboratory strain K-12.</title>
        <authorList>
            <person name="Hayashi T."/>
            <person name="Makino K."/>
            <person name="Ohnishi M."/>
            <person name="Kurokawa K."/>
            <person name="Ishii K."/>
            <person name="Yokoyama K."/>
            <person name="Han C.-G."/>
            <person name="Ohtsubo E."/>
            <person name="Nakayama K."/>
            <person name="Murata T."/>
            <person name="Tanaka M."/>
            <person name="Tobe T."/>
            <person name="Iida T."/>
            <person name="Takami H."/>
            <person name="Honda T."/>
            <person name="Sasakawa C."/>
            <person name="Ogasawara N."/>
            <person name="Yasunaga T."/>
            <person name="Kuhara S."/>
            <person name="Shiba T."/>
            <person name="Hattori M."/>
            <person name="Shinagawa H."/>
        </authorList>
    </citation>
    <scope>NUCLEOTIDE SEQUENCE [LARGE SCALE GENOMIC DNA]</scope>
    <source>
        <strain>O157:H7 / Sakai / RIMD 0509952 / EHEC</strain>
    </source>
</reference>
<keyword id="KW-0997">Cell inner membrane</keyword>
<keyword id="KW-1003">Cell membrane</keyword>
<keyword id="KW-0472">Membrane</keyword>
<keyword id="KW-0653">Protein transport</keyword>
<keyword id="KW-1185">Reference proteome</keyword>
<keyword id="KW-0811">Translocation</keyword>
<keyword id="KW-0812">Transmembrane</keyword>
<keyword id="KW-1133">Transmembrane helix</keyword>
<keyword id="KW-0813">Transport</keyword>
<comment type="function">
    <text evidence="1">Involved in protein export. Participates in an early event of protein translocation (By similarity).</text>
</comment>
<comment type="subcellular location">
    <subcellularLocation>
        <location evidence="1">Cell inner membrane</location>
        <topology evidence="1">Multi-pass membrane protein</topology>
    </subcellularLocation>
</comment>
<comment type="PTM">
    <text evidence="1">The N-terminus is blocked.</text>
</comment>
<comment type="similarity">
    <text evidence="4">Belongs to the SecG family.</text>
</comment>
<dbReference type="EMBL" id="AE005174">
    <property type="protein sequence ID" value="AAG58309.1"/>
    <property type="molecule type" value="Genomic_DNA"/>
</dbReference>
<dbReference type="EMBL" id="BA000007">
    <property type="protein sequence ID" value="BAB37477.1"/>
    <property type="molecule type" value="Genomic_DNA"/>
</dbReference>
<dbReference type="PIR" id="F91135">
    <property type="entry name" value="F91135"/>
</dbReference>
<dbReference type="RefSeq" id="NP_312081.1">
    <property type="nucleotide sequence ID" value="NC_002695.1"/>
</dbReference>
<dbReference type="RefSeq" id="WP_001295556.1">
    <property type="nucleotide sequence ID" value="NZ_VOAI01000014.1"/>
</dbReference>
<dbReference type="SMR" id="P0AGA1"/>
<dbReference type="STRING" id="155864.Z4537"/>
<dbReference type="GeneID" id="916105"/>
<dbReference type="GeneID" id="93778806"/>
<dbReference type="KEGG" id="ece:Z4537"/>
<dbReference type="KEGG" id="ecs:ECs_4054"/>
<dbReference type="PATRIC" id="fig|386585.9.peg.4233"/>
<dbReference type="eggNOG" id="COG1314">
    <property type="taxonomic scope" value="Bacteria"/>
</dbReference>
<dbReference type="HOGENOM" id="CLU_094156_2_2_6"/>
<dbReference type="OMA" id="MYEVLMV"/>
<dbReference type="Proteomes" id="UP000000558">
    <property type="component" value="Chromosome"/>
</dbReference>
<dbReference type="Proteomes" id="UP000002519">
    <property type="component" value="Chromosome"/>
</dbReference>
<dbReference type="GO" id="GO:0005886">
    <property type="term" value="C:plasma membrane"/>
    <property type="evidence" value="ECO:0007669"/>
    <property type="project" value="UniProtKB-SubCell"/>
</dbReference>
<dbReference type="GO" id="GO:0015450">
    <property type="term" value="F:protein-transporting ATPase activity"/>
    <property type="evidence" value="ECO:0007669"/>
    <property type="project" value="InterPro"/>
</dbReference>
<dbReference type="GO" id="GO:0065002">
    <property type="term" value="P:intracellular protein transmembrane transport"/>
    <property type="evidence" value="ECO:0007669"/>
    <property type="project" value="TreeGrafter"/>
</dbReference>
<dbReference type="GO" id="GO:0009306">
    <property type="term" value="P:protein secretion"/>
    <property type="evidence" value="ECO:0007669"/>
    <property type="project" value="InterPro"/>
</dbReference>
<dbReference type="GO" id="GO:0043952">
    <property type="term" value="P:protein transport by the Sec complex"/>
    <property type="evidence" value="ECO:0007669"/>
    <property type="project" value="TreeGrafter"/>
</dbReference>
<dbReference type="InterPro" id="IPR004692">
    <property type="entry name" value="SecG"/>
</dbReference>
<dbReference type="NCBIfam" id="TIGR00810">
    <property type="entry name" value="secG"/>
    <property type="match status" value="1"/>
</dbReference>
<dbReference type="PANTHER" id="PTHR34182">
    <property type="entry name" value="PROTEIN-EXPORT MEMBRANE PROTEIN SECG"/>
    <property type="match status" value="1"/>
</dbReference>
<dbReference type="PANTHER" id="PTHR34182:SF1">
    <property type="entry name" value="PROTEIN-EXPORT MEMBRANE PROTEIN SECG"/>
    <property type="match status" value="1"/>
</dbReference>
<dbReference type="Pfam" id="PF03840">
    <property type="entry name" value="SecG"/>
    <property type="match status" value="1"/>
</dbReference>
<dbReference type="PRINTS" id="PR01651">
    <property type="entry name" value="SECGEXPORT"/>
</dbReference>
<proteinExistence type="inferred from homology"/>
<protein>
    <recommendedName>
        <fullName>Protein-export membrane protein SecG</fullName>
    </recommendedName>
    <alternativeName>
        <fullName>P12</fullName>
    </alternativeName>
    <alternativeName>
        <fullName>Preprotein translocase band 1 subunit</fullName>
    </alternativeName>
</protein>